<comment type="function">
    <text evidence="1">Antimicrobial peptide.</text>
</comment>
<comment type="subcellular location">
    <subcellularLocation>
        <location evidence="2">Secreted</location>
    </subcellularLocation>
</comment>
<comment type="tissue specificity">
    <text evidence="5">Expressed by the skin glands.</text>
</comment>
<comment type="mass spectrometry" mass="1728.05" method="Electrospray" evidence="2"/>
<comment type="similarity">
    <text evidence="3">Belongs to the frog skin active peptide (FSAP) family. Temporin subfamily.</text>
</comment>
<organism evidence="3">
    <name type="scientific">Rana temporaria</name>
    <name type="common">European common frog</name>
    <dbReference type="NCBI Taxonomy" id="8407"/>
    <lineage>
        <taxon>Eukaryota</taxon>
        <taxon>Metazoa</taxon>
        <taxon>Chordata</taxon>
        <taxon>Craniata</taxon>
        <taxon>Vertebrata</taxon>
        <taxon>Euteleostomi</taxon>
        <taxon>Amphibia</taxon>
        <taxon>Batrachia</taxon>
        <taxon>Anura</taxon>
        <taxon>Neobatrachia</taxon>
        <taxon>Ranoidea</taxon>
        <taxon>Ranidae</taxon>
        <taxon>Rana</taxon>
        <taxon>Rana</taxon>
    </lineage>
</organism>
<proteinExistence type="evidence at protein level"/>
<feature type="peptide" id="PRO_0000456399" description="Temporin-1Ts" evidence="2">
    <location>
        <begin position="1"/>
        <end position="16"/>
    </location>
</feature>
<feature type="modified residue" description="Phenylalanine amide" evidence="2">
    <location>
        <position position="16"/>
    </location>
</feature>
<feature type="unsure residue" description="L or I" evidence="2">
    <location>
        <position position="5"/>
    </location>
</feature>
<feature type="unsure residue" description="L or I" evidence="2">
    <location>
        <position position="9"/>
    </location>
</feature>
<sequence length="16" mass="1730">LVPFLGRTLGGLLARF</sequence>
<accession>C0HM33</accession>
<reference evidence="4" key="1">
    <citation type="journal article" date="2021" name="Anal. Bioanal. Chem.">
        <title>Differentiation of Central Slovenian and Moscow populations of Rana temporaria frogs using peptide biomarkers of temporins family.</title>
        <authorList>
            <person name="Samgina T.Y."/>
            <person name="Vasileva I.D."/>
            <person name="Kovalev S.V."/>
            <person name="Trebse P."/>
            <person name="Torkar G."/>
            <person name="Surin A.K."/>
            <person name="Zubarev R.A."/>
            <person name="Lebedev A.T."/>
        </authorList>
    </citation>
    <scope>PROTEIN SEQUENCE</scope>
    <scope>IDENTIFICATION BY MASS SPECTROMETRY</scope>
    <scope>SUBCELLULAR LOCATION</scope>
    <scope>AMIDATION AT PHE-16</scope>
    <source>
        <tissue evidence="3">Skin secretion</tissue>
    </source>
</reference>
<name>TPS_RANTE</name>
<protein>
    <recommendedName>
        <fullName evidence="5">Temporin-1Ts</fullName>
    </recommendedName>
    <alternativeName>
        <fullName evidence="3">Temporin-S</fullName>
    </alternativeName>
</protein>
<keyword id="KW-0027">Amidation</keyword>
<keyword id="KW-0878">Amphibian defense peptide</keyword>
<keyword id="KW-0044">Antibiotic</keyword>
<keyword id="KW-0929">Antimicrobial</keyword>
<keyword id="KW-0903">Direct protein sequencing</keyword>
<keyword id="KW-0391">Immunity</keyword>
<keyword id="KW-0399">Innate immunity</keyword>
<keyword id="KW-0964">Secreted</keyword>
<evidence type="ECO:0000250" key="1">
    <source>
        <dbReference type="UniProtKB" id="P79875"/>
    </source>
</evidence>
<evidence type="ECO:0000269" key="2">
    <source>
    </source>
</evidence>
<evidence type="ECO:0000303" key="3">
    <source>
    </source>
</evidence>
<evidence type="ECO:0000305" key="4"/>
<evidence type="ECO:0000305" key="5">
    <source>
    </source>
</evidence>
<dbReference type="GO" id="GO:0005576">
    <property type="term" value="C:extracellular region"/>
    <property type="evidence" value="ECO:0000314"/>
    <property type="project" value="UniProtKB"/>
</dbReference>
<dbReference type="GO" id="GO:0042742">
    <property type="term" value="P:defense response to bacterium"/>
    <property type="evidence" value="ECO:0007669"/>
    <property type="project" value="UniProtKB-KW"/>
</dbReference>
<dbReference type="GO" id="GO:0045087">
    <property type="term" value="P:innate immune response"/>
    <property type="evidence" value="ECO:0007669"/>
    <property type="project" value="UniProtKB-KW"/>
</dbReference>